<feature type="chain" id="PRO_0000327707" description="BEACH domain-containing protein lvsA">
    <location>
        <begin position="1"/>
        <end position="3619"/>
    </location>
</feature>
<feature type="repeat" description="WD 1">
    <location>
        <begin position="94"/>
        <end position="133"/>
    </location>
</feature>
<feature type="repeat" description="WD 2">
    <location>
        <begin position="2294"/>
        <end position="2335"/>
    </location>
</feature>
<feature type="domain" description="BEACH-type PH" evidence="3">
    <location>
        <begin position="2807"/>
        <end position="2932"/>
    </location>
</feature>
<feature type="domain" description="BEACH" evidence="2">
    <location>
        <begin position="2972"/>
        <end position="3270"/>
    </location>
</feature>
<feature type="repeat" description="WD 3">
    <location>
        <begin position="3347"/>
        <end position="3386"/>
    </location>
</feature>
<feature type="repeat" description="WD 4">
    <location>
        <begin position="3389"/>
        <end position="3428"/>
    </location>
</feature>
<feature type="repeat" description="WD 5">
    <location>
        <begin position="3431"/>
        <end position="3471"/>
    </location>
</feature>
<feature type="repeat" description="WD 6">
    <location>
        <begin position="3474"/>
        <end position="3518"/>
    </location>
</feature>
<feature type="repeat" description="WD 7">
    <location>
        <begin position="3563"/>
        <end position="3602"/>
    </location>
</feature>
<feature type="region of interest" description="Disordered" evidence="4">
    <location>
        <begin position="1"/>
        <end position="117"/>
    </location>
</feature>
<feature type="region of interest" description="Disordered" evidence="4">
    <location>
        <begin position="648"/>
        <end position="709"/>
    </location>
</feature>
<feature type="region of interest" description="Disordered" evidence="4">
    <location>
        <begin position="1101"/>
        <end position="1129"/>
    </location>
</feature>
<feature type="region of interest" description="Disordered" evidence="4">
    <location>
        <begin position="1367"/>
        <end position="1390"/>
    </location>
</feature>
<feature type="region of interest" description="Disordered" evidence="4">
    <location>
        <begin position="1636"/>
        <end position="1658"/>
    </location>
</feature>
<feature type="region of interest" description="Disordered" evidence="4">
    <location>
        <begin position="1893"/>
        <end position="1924"/>
    </location>
</feature>
<feature type="region of interest" description="Disordered" evidence="4">
    <location>
        <begin position="1964"/>
        <end position="1999"/>
    </location>
</feature>
<feature type="region of interest" description="Disordered" evidence="4">
    <location>
        <begin position="2403"/>
        <end position="2457"/>
    </location>
</feature>
<feature type="region of interest" description="Disordered" evidence="4">
    <location>
        <begin position="2596"/>
        <end position="2785"/>
    </location>
</feature>
<feature type="region of interest" description="Disordered" evidence="4">
    <location>
        <begin position="2940"/>
        <end position="2971"/>
    </location>
</feature>
<feature type="region of interest" description="Disordered" evidence="4">
    <location>
        <begin position="3516"/>
        <end position="3539"/>
    </location>
</feature>
<feature type="coiled-coil region" evidence="1">
    <location>
        <begin position="2234"/>
        <end position="2258"/>
    </location>
</feature>
<feature type="compositionally biased region" description="Pro residues" evidence="4">
    <location>
        <begin position="17"/>
        <end position="30"/>
    </location>
</feature>
<feature type="compositionally biased region" description="Low complexity" evidence="4">
    <location>
        <begin position="31"/>
        <end position="59"/>
    </location>
</feature>
<feature type="compositionally biased region" description="Low complexity" evidence="4">
    <location>
        <begin position="68"/>
        <end position="87"/>
    </location>
</feature>
<feature type="compositionally biased region" description="Low complexity" evidence="4">
    <location>
        <begin position="97"/>
        <end position="117"/>
    </location>
</feature>
<feature type="compositionally biased region" description="Low complexity" evidence="4">
    <location>
        <begin position="656"/>
        <end position="689"/>
    </location>
</feature>
<feature type="compositionally biased region" description="Low complexity" evidence="4">
    <location>
        <begin position="1101"/>
        <end position="1127"/>
    </location>
</feature>
<feature type="compositionally biased region" description="Low complexity" evidence="4">
    <location>
        <begin position="1375"/>
        <end position="1387"/>
    </location>
</feature>
<feature type="compositionally biased region" description="Low complexity" evidence="4">
    <location>
        <begin position="1640"/>
        <end position="1652"/>
    </location>
</feature>
<feature type="compositionally biased region" description="Low complexity" evidence="4">
    <location>
        <begin position="1893"/>
        <end position="1923"/>
    </location>
</feature>
<feature type="compositionally biased region" description="Polar residues" evidence="4">
    <location>
        <begin position="1974"/>
        <end position="1986"/>
    </location>
</feature>
<feature type="compositionally biased region" description="Basic and acidic residues" evidence="4">
    <location>
        <begin position="2440"/>
        <end position="2452"/>
    </location>
</feature>
<feature type="compositionally biased region" description="Low complexity" evidence="4">
    <location>
        <begin position="2596"/>
        <end position="2662"/>
    </location>
</feature>
<feature type="compositionally biased region" description="Polar residues" evidence="4">
    <location>
        <begin position="2663"/>
        <end position="2687"/>
    </location>
</feature>
<feature type="compositionally biased region" description="Polar residues" evidence="4">
    <location>
        <begin position="2694"/>
        <end position="2725"/>
    </location>
</feature>
<feature type="compositionally biased region" description="Low complexity" evidence="4">
    <location>
        <begin position="2726"/>
        <end position="2735"/>
    </location>
</feature>
<feature type="compositionally biased region" description="Low complexity" evidence="4">
    <location>
        <begin position="2742"/>
        <end position="2764"/>
    </location>
</feature>
<feature type="compositionally biased region" description="Gly residues" evidence="4">
    <location>
        <begin position="2944"/>
        <end position="2953"/>
    </location>
</feature>
<feature type="compositionally biased region" description="Basic and acidic residues" evidence="4">
    <location>
        <begin position="2959"/>
        <end position="2971"/>
    </location>
</feature>
<feature type="compositionally biased region" description="Low complexity" evidence="4">
    <location>
        <begin position="3518"/>
        <end position="3534"/>
    </location>
</feature>
<feature type="sequence conflict" description="In Ref. 1; AAD52096." evidence="9" ref="1">
    <original>I</original>
    <variation>V</variation>
    <location>
        <position position="358"/>
    </location>
</feature>
<feature type="sequence conflict" description="In Ref. 1; AAD52096." evidence="9" ref="1">
    <original>N</original>
    <variation>D</variation>
    <location>
        <position position="1358"/>
    </location>
</feature>
<feature type="sequence conflict" description="In Ref. 1; AAD52096." evidence="9" ref="1">
    <original>S</original>
    <variation>N</variation>
    <location>
        <position position="1362"/>
    </location>
</feature>
<feature type="sequence conflict" description="In Ref. 1; AAD52096." evidence="9" ref="1">
    <original>P</original>
    <variation>Q</variation>
    <location>
        <position position="2553"/>
    </location>
</feature>
<organism>
    <name type="scientific">Dictyostelium discoideum</name>
    <name type="common">Social amoeba</name>
    <dbReference type="NCBI Taxonomy" id="44689"/>
    <lineage>
        <taxon>Eukaryota</taxon>
        <taxon>Amoebozoa</taxon>
        <taxon>Evosea</taxon>
        <taxon>Eumycetozoa</taxon>
        <taxon>Dictyostelia</taxon>
        <taxon>Dictyosteliales</taxon>
        <taxon>Dictyosteliaceae</taxon>
        <taxon>Dictyostelium</taxon>
    </lineage>
</organism>
<keyword id="KW-0175">Coiled coil</keyword>
<keyword id="KW-0472">Membrane</keyword>
<keyword id="KW-0581">Phagocytosis</keyword>
<keyword id="KW-1185">Reference proteome</keyword>
<keyword id="KW-0677">Repeat</keyword>
<keyword id="KW-0926">Vacuole</keyword>
<keyword id="KW-0853">WD repeat</keyword>
<name>LVSA_DICDI</name>
<protein>
    <recommendedName>
        <fullName>BEACH domain-containing protein lvsA</fullName>
    </recommendedName>
    <alternativeName>
        <fullName>Large volume sphere mutant protein A</fullName>
    </alternativeName>
</protein>
<sequence>MFRRFKDLIGTSEDPTPQVPHSPGHPPHQPPQQQQQQQQQQQQQQQQQQQQQQQQQQPQPQQPLSPRSVSSPIGSTTSSNSTSSFSSPVRKYSSATEESSSINSNNNNNNNKNNNNNNNSNIIESNINVWTIMIGSEVEVIRSQATAQKLKLLWQEFLSSKSDKDKVMRLNKLLPYFIGLYEDKKIDTKSPMVDIFGNNSKSFSFAISRRLVKDINEIMKQANSPQQPPQPPQLIKETIAKEIYKFFSTTSGQVSGFELLYSIEILSESNTSCAEAMAEASIPSMLVRCLQYFFLVPYTTMMETTKGIIEEKLIRTLCFLSKQKSAIEELQKTDTLSTLFALMSNECPPSHRPLRAKIGSFGLELTDLYPPTITYINSKRVIANIIKDLTNYYMFTPESYVTLCRIIIKILSESSKKSTILLDEFQRNDGYTFLVDSLFRLESSKDKPALFEQLLDSICSLVYIGYGNVSLPVENSSVPYQTSINNIKEISNQNYISKNGNAFKVLERYFLKSNYEENRVKILDRILSVYSSNTVNFILLQHTSTLTKFIQEYESLSNGLKYHVMKIVCFVVTVLNCVPFQELSTFSLLVGENPSFYTLEMINQLITTLVNFEFRYKHIFRETGLLDILVKVIDVIAQDIIRLNNSKKIDDDDENNNNNNNNNNNNNNNNNNNNDNDNNNNNDNNNEENGSGSNGPIVPCMTGNGEKEADSNDQALNSIIKVESFQILLDSLFILISENPDNISLIRSFSIFNILLRFLPYSSVRGKSLRILQQLIKYDPEPTQKEFDGLIKVLTSVNKENYPMKSDILNATRKLFNISKHARDSFREHGGFVSIISVFISLESSFSPNRKDSRNWDMEKLELIESICRCTTSALCGNVINRENFEQQIGYKTFSSCLIMTGVLGTEFSKSVVDFIFDMVTENLNASDQISNQMIINNVESFNVILDIIPHIENKDFRLQIISRINKMAEYGRYNQEALSKLSIPDWILSRFPSNLSNANDPLQPLLLSLIQTVGANCLSGSELRQFVKLLQPEHSPEVLLKILSSMAKSPPTPPYFEFNLSKIPFGYIRVPITERAWPPTNGYTIMFWLYIDKFPTVNNNNNNNNSSNNSNNSNNSNNNNNNNNNNDQIDLVHIYSDDKKSSLYIYLKNGIITVNIINSSKYVIEIPSYKFVEGKWYHIGIVHARRLLGGTDFKLFVDGFLKYTATKAQYPAQITSGSMLICDIGVSNQNRFPTDSIWRIGTFYLLEDSLGAKHINTIYFLGPNYASNFKGRFSPYQTYEIVNSANLMAIKDLDYGDQLGPLNLAKVSMQIDENKILVGLCASNKLIRTNNSSKVVYNEIFNGIINELSQNHGVALNVFSSPNGTSPNLTGLQNNNNNNNNSGGSNSKKDLEGRVEIINQADLTTKLRGVLIGSVEAFRRNKVADSIKKIGGMPISLLLLEKANSEETLFDSLGLLVGLIQYHPTNTHEMSQINGYELLAWVLKKKASLGLFNSNILELLFDLIGINGNCSTTITSRAPQEGTVANWNACKYIMMNWDIWRLTTPALQRHVINGYNSLIVNNIQRRFNIDSLRKVNVIQEIFDILSSSTNEEPLPESVASSVINVLYNILSYGGLIEDDIRQISAFLISHLHKDIPTPSSSSSSSSTSSTSSRRKSIHRSKLATMELSNTATIQLVNHVFYTFLKVVSNCQTQETAAIFRRVSSYWCFFFIDENLPPLTVSLALRVTCIFFLYKYDYCSTFIKKSGFKLLEKVLPSLSGHQEIYLCLLHLLLGGDPKLLVDLDLSSSSGGAGGTTIVFHELLRIFTPFEKSLYCIEAAQLILSLIKRSYEDNYQYLEQKQQELQNANQGLDNDELLSSLISNVNINNSINNNDNSNSPLSTFQTISRSVSSSSISSNISSSSSSSTLVNSSNSNNNNNTPTSGLASTITKFGNLWNKFEEKTLEFAVTTGAIDENSTGATDAQQAALKKKNRMSIQSSPFQSKNLGTGGDDSVTNTPNGSSLHNRVTGMDDDSKLNGALGGGGGGGGGGVSVGDNQPINFNLYDEMLPELKISQFATPEESSNLQYTMLTYFIYLFHENQYFQQECYSQPMVEELISILFPNGKINLPPLYNSTGQTNGIKDRVLDLVVKFLCQIMLSAMRKTSKAISIIEMVLEGAPTTATDEEFILYHSRILLDLMYVVETNITKTEFFDNERVHSNLIKLSSMLVDRVNLDQLVKNNKIIIAKRIFLFIVKILEKLEADRVGLQKTVQSLYKSLNRIILYLINHTTDTDLSFVANHIINHQRIIFSENNLDSDFMNAFCYPLYKLVISDQHEHVDNSIKLWRLLLSLKTSSYIESLATVLQLKVSSGSNQRQSEIIDLKPGFELLRNTSGNGAFNNDEFKLWINDNIQTITQVFEENPKKQHLSFKNNEKKHSSEHTLPSLKSRRTERLSKKQRQDRKDQSHQEEKSKHITKKAQYFVRSESDRRKKIKQLESDKQKFNAIQWENMRAQITRERAVWGPSEPHPLDKWKLDSTEGPYRMRKKMEKNYNFYKNYPYVPPSFDEQNNSLLPIPCSADSETYMNIVGTEEANLLESSYWKFDLLSTNQVITSSTNTSSITNNNNNNNNNNNNNNNNNNNTITKSTSQNANNNNNANNMNQSTSSSSSNTTTTTTPQQSSSQIKVSSPELSSNEITPPTSPVQSSSEDVFKSPKLQSSTVEGQLSRNPSSSELFNDNSSTISEENSSLTSASTTLSPPPPSTQTTTTTTTSTPTTQSSVATTTTGNTNEVDEETSTNNQTTSEDETQAFIRLLDPYDQSYLKDAMRKDPRLNGIMYNCGSVDGMDKIEGILIFCPVYMYIFDGYYKDENTGDISEVEEKINSEWLPEGTVLPMKKKIIHYFLKWAYEDIRDVLKRRYLLRQVALEIFSTDGRNNLVVYRDEPTRDEVYHTLVNNVSSHNTIGGDAQGITGGQTGNDDNDDHHGGGGGRGVRDRFTSIWRKSPLTLKWQQGQISNFQYLMHLNTLAGRSYNDLTQYPVFPWVLSDYESEELDIDDPKVYRDLSKPMGALEESRAQKFRERFENWDDQEPNEHGHKVPKFHYGTHYSSAAIVLYYLIRLEPFTQHFLKLQGGRWDQPDRLFSSITEAWASSSQGSTGVVMELIPEFYYLDEFLVNNNKFNFGTKQGGEPIDDIILPPWAKGSPQEFIKLHRKALESDYVSEHLHEWIDLIFGYRQQGKAADDSLNVFYYLTYEGAVNIDAISDPVEKAATIAQINNFGQTPKQLFDKPHPKRNATLMGLPFYAKALTGNFIKDIGEPVGQIRLINDRATCVGFNKVLLPPNHSKYMLWGLPDGSIRYNTGDKIKVLEDHHDGPLTCLTATEDGRICVSGGSDSLICVYNLKRFSLAKRLSGHTGSITCVSASRPYSIIVSGSDDRTCIIWDLNRLCYVRSLDAHEGPISCIGIHDTTGEIVVCSGTTISVYTVNGELLINYKTSQIANDQITCCIWSKGPEWLGENVLLTGHRDGKVKVWGLETRLLPDNNNSNNNNNNNNNNNNNATQIPSTNNNKLKFKNVIILRATFSNSQSHSTAITSIFLTNDQQKFYTGDITGRVCMWSDNEASQVKQRGWINTDIRGILQSEKK</sequence>
<proteinExistence type="predicted"/>
<gene>
    <name type="primary">lvsA</name>
    <name type="ORF">DDB_G0269150</name>
</gene>
<comment type="function">
    <text evidence="5 6 7 8">Involved in myosin-independent cytokinesis and early steps of phagocytosis. Also involved in contractile vacuole-mediated osmoregulation.</text>
</comment>
<comment type="subcellular location">
    <subcellularLocation>
        <location evidence="7 8">Contractile vacuole membrane</location>
        <topology evidence="7 8">Peripheral membrane protein</topology>
    </subcellularLocation>
</comment>
<comment type="domain">
    <text>Deletion of N-terminal region (689 aa) causes partial loss of function, while deletions of the first 1828 residues resembles the null mutant.</text>
</comment>
<accession>Q55DM1</accession>
<accession>Q9U573</accession>
<dbReference type="EMBL" id="AF088979">
    <property type="protein sequence ID" value="AAD52096.2"/>
    <property type="molecule type" value="Genomic_DNA"/>
</dbReference>
<dbReference type="EMBL" id="AAFI02000005">
    <property type="protein sequence ID" value="EAL71925.2"/>
    <property type="molecule type" value="Genomic_DNA"/>
</dbReference>
<dbReference type="RefSeq" id="XP_646110.2">
    <property type="nucleotide sequence ID" value="XM_641018.2"/>
</dbReference>
<dbReference type="SMR" id="Q55DM1"/>
<dbReference type="FunCoup" id="Q55DM1">
    <property type="interactions" value="196"/>
</dbReference>
<dbReference type="STRING" id="44689.Q55DM1"/>
<dbReference type="GlyGen" id="Q55DM1">
    <property type="glycosylation" value="1 site"/>
</dbReference>
<dbReference type="PaxDb" id="44689-DDB0191124"/>
<dbReference type="EnsemblProtists" id="EAL71925">
    <property type="protein sequence ID" value="EAL71925"/>
    <property type="gene ID" value="DDB_G0269150"/>
</dbReference>
<dbReference type="GeneID" id="8617060"/>
<dbReference type="KEGG" id="ddi:DDB_G0269150"/>
<dbReference type="dictyBase" id="DDB_G0269150">
    <property type="gene designation" value="lvsA"/>
</dbReference>
<dbReference type="VEuPathDB" id="AmoebaDB:DDB_G0269150"/>
<dbReference type="eggNOG" id="KOG1786">
    <property type="taxonomic scope" value="Eukaryota"/>
</dbReference>
<dbReference type="eggNOG" id="KOG1788">
    <property type="taxonomic scope" value="Eukaryota"/>
</dbReference>
<dbReference type="HOGENOM" id="CLU_000175_5_0_1"/>
<dbReference type="InParanoid" id="Q55DM1"/>
<dbReference type="OMA" id="GVCHLIE"/>
<dbReference type="PhylomeDB" id="Q55DM1"/>
<dbReference type="PRO" id="PR:Q55DM1"/>
<dbReference type="Proteomes" id="UP000002195">
    <property type="component" value="Chromosome 1"/>
</dbReference>
<dbReference type="GO" id="GO:0031164">
    <property type="term" value="C:contractile vacuolar membrane"/>
    <property type="evidence" value="ECO:0000314"/>
    <property type="project" value="dictyBase"/>
</dbReference>
<dbReference type="GO" id="GO:0000331">
    <property type="term" value="C:contractile vacuole"/>
    <property type="evidence" value="ECO:0000314"/>
    <property type="project" value="dictyBase"/>
</dbReference>
<dbReference type="GO" id="GO:0005737">
    <property type="term" value="C:cytoplasm"/>
    <property type="evidence" value="ECO:0000314"/>
    <property type="project" value="dictyBase"/>
</dbReference>
<dbReference type="GO" id="GO:0008289">
    <property type="term" value="F:lipid binding"/>
    <property type="evidence" value="ECO:0000314"/>
    <property type="project" value="dictyBase"/>
</dbReference>
<dbReference type="GO" id="GO:0044877">
    <property type="term" value="F:protein-containing complex binding"/>
    <property type="evidence" value="ECO:0000314"/>
    <property type="project" value="dictyBase"/>
</dbReference>
<dbReference type="GO" id="GO:0000915">
    <property type="term" value="P:actomyosin contractile ring assembly"/>
    <property type="evidence" value="ECO:0000315"/>
    <property type="project" value="dictyBase"/>
</dbReference>
<dbReference type="GO" id="GO:0032060">
    <property type="term" value="P:bleb assembly"/>
    <property type="evidence" value="ECO:0000315"/>
    <property type="project" value="dictyBase"/>
</dbReference>
<dbReference type="GO" id="GO:0007155">
    <property type="term" value="P:cell adhesion"/>
    <property type="evidence" value="ECO:0000315"/>
    <property type="project" value="dictyBase"/>
</dbReference>
<dbReference type="GO" id="GO:0140026">
    <property type="term" value="P:contractile vacuole dissociation from plasma membrane"/>
    <property type="evidence" value="ECO:0000315"/>
    <property type="project" value="dictyBase"/>
</dbReference>
<dbReference type="GO" id="GO:0033298">
    <property type="term" value="P:contractile vacuole organization"/>
    <property type="evidence" value="ECO:0000315"/>
    <property type="project" value="dictyBase"/>
</dbReference>
<dbReference type="GO" id="GO:0007032">
    <property type="term" value="P:endosome organization"/>
    <property type="evidence" value="ECO:0000315"/>
    <property type="project" value="dictyBase"/>
</dbReference>
<dbReference type="GO" id="GO:0006971">
    <property type="term" value="P:hypotonic response"/>
    <property type="evidence" value="ECO:0007007"/>
    <property type="project" value="dictyBase"/>
</dbReference>
<dbReference type="GO" id="GO:0006874">
    <property type="term" value="P:intracellular calcium ion homeostasis"/>
    <property type="evidence" value="ECO:0000315"/>
    <property type="project" value="dictyBase"/>
</dbReference>
<dbReference type="GO" id="GO:0000281">
    <property type="term" value="P:mitotic cytokinesis"/>
    <property type="evidence" value="ECO:0000315"/>
    <property type="project" value="dictyBase"/>
</dbReference>
<dbReference type="GO" id="GO:0006909">
    <property type="term" value="P:phagocytosis"/>
    <property type="evidence" value="ECO:0000315"/>
    <property type="project" value="dictyBase"/>
</dbReference>
<dbReference type="GO" id="GO:0006907">
    <property type="term" value="P:pinocytosis"/>
    <property type="evidence" value="ECO:0000315"/>
    <property type="project" value="dictyBase"/>
</dbReference>
<dbReference type="CDD" id="cd06071">
    <property type="entry name" value="Beach"/>
    <property type="match status" value="1"/>
</dbReference>
<dbReference type="CDD" id="cd01201">
    <property type="entry name" value="PH_BEACH"/>
    <property type="match status" value="1"/>
</dbReference>
<dbReference type="FunFam" id="2.130.10.10:FF:000292">
    <property type="entry name" value="Lysosomal trafficking regulator"/>
    <property type="match status" value="1"/>
</dbReference>
<dbReference type="FunFam" id="1.10.1540.10:FF:000002">
    <property type="entry name" value="WD repeat and FYVE domain containing 3"/>
    <property type="match status" value="1"/>
</dbReference>
<dbReference type="Gene3D" id="1.10.1540.10">
    <property type="entry name" value="BEACH domain"/>
    <property type="match status" value="1"/>
</dbReference>
<dbReference type="Gene3D" id="2.30.29.30">
    <property type="entry name" value="Pleckstrin-homology domain (PH domain)/Phosphotyrosine-binding domain (PTB)"/>
    <property type="match status" value="1"/>
</dbReference>
<dbReference type="Gene3D" id="2.130.10.10">
    <property type="entry name" value="YVTN repeat-like/Quinoprotein amine dehydrogenase"/>
    <property type="match status" value="2"/>
</dbReference>
<dbReference type="InterPro" id="IPR056252">
    <property type="entry name" value="Alfy-like_Arm-like"/>
</dbReference>
<dbReference type="InterPro" id="IPR000409">
    <property type="entry name" value="BEACH_dom"/>
</dbReference>
<dbReference type="InterPro" id="IPR036372">
    <property type="entry name" value="BEACH_dom_sf"/>
</dbReference>
<dbReference type="InterPro" id="IPR051944">
    <property type="entry name" value="BEACH_domain_protein"/>
</dbReference>
<dbReference type="InterPro" id="IPR013320">
    <property type="entry name" value="ConA-like_dom_sf"/>
</dbReference>
<dbReference type="InterPro" id="IPR023362">
    <property type="entry name" value="PH-BEACH_dom"/>
</dbReference>
<dbReference type="InterPro" id="IPR011993">
    <property type="entry name" value="PH-like_dom_sf"/>
</dbReference>
<dbReference type="InterPro" id="IPR015943">
    <property type="entry name" value="WD40/YVTN_repeat-like_dom_sf"/>
</dbReference>
<dbReference type="InterPro" id="IPR019775">
    <property type="entry name" value="WD40_repeat_CS"/>
</dbReference>
<dbReference type="InterPro" id="IPR036322">
    <property type="entry name" value="WD40_repeat_dom_sf"/>
</dbReference>
<dbReference type="InterPro" id="IPR001680">
    <property type="entry name" value="WD40_rpt"/>
</dbReference>
<dbReference type="PANTHER" id="PTHR46108">
    <property type="entry name" value="BLUE CHEESE"/>
    <property type="match status" value="1"/>
</dbReference>
<dbReference type="PANTHER" id="PTHR46108:SF4">
    <property type="entry name" value="BLUE CHEESE"/>
    <property type="match status" value="1"/>
</dbReference>
<dbReference type="Pfam" id="PF23295">
    <property type="entry name" value="Arm_4"/>
    <property type="match status" value="1"/>
</dbReference>
<dbReference type="Pfam" id="PF02138">
    <property type="entry name" value="Beach"/>
    <property type="match status" value="1"/>
</dbReference>
<dbReference type="Pfam" id="PF16057">
    <property type="entry name" value="DUF4800"/>
    <property type="match status" value="1"/>
</dbReference>
<dbReference type="Pfam" id="PF14844">
    <property type="entry name" value="PH_BEACH"/>
    <property type="match status" value="1"/>
</dbReference>
<dbReference type="Pfam" id="PF00400">
    <property type="entry name" value="WD40"/>
    <property type="match status" value="3"/>
</dbReference>
<dbReference type="SMART" id="SM01026">
    <property type="entry name" value="Beach"/>
    <property type="match status" value="1"/>
</dbReference>
<dbReference type="SMART" id="SM00320">
    <property type="entry name" value="WD40"/>
    <property type="match status" value="5"/>
</dbReference>
<dbReference type="SUPFAM" id="SSF81837">
    <property type="entry name" value="BEACH domain"/>
    <property type="match status" value="1"/>
</dbReference>
<dbReference type="SUPFAM" id="SSF49899">
    <property type="entry name" value="Concanavalin A-like lectins/glucanases"/>
    <property type="match status" value="1"/>
</dbReference>
<dbReference type="SUPFAM" id="SSF50729">
    <property type="entry name" value="PH domain-like"/>
    <property type="match status" value="1"/>
</dbReference>
<dbReference type="SUPFAM" id="SSF50978">
    <property type="entry name" value="WD40 repeat-like"/>
    <property type="match status" value="1"/>
</dbReference>
<dbReference type="PROSITE" id="PS50197">
    <property type="entry name" value="BEACH"/>
    <property type="match status" value="1"/>
</dbReference>
<dbReference type="PROSITE" id="PS51783">
    <property type="entry name" value="PH_BEACH"/>
    <property type="match status" value="1"/>
</dbReference>
<dbReference type="PROSITE" id="PS00678">
    <property type="entry name" value="WD_REPEATS_1"/>
    <property type="match status" value="1"/>
</dbReference>
<dbReference type="PROSITE" id="PS50082">
    <property type="entry name" value="WD_REPEATS_2"/>
    <property type="match status" value="1"/>
</dbReference>
<dbReference type="PROSITE" id="PS50294">
    <property type="entry name" value="WD_REPEATS_REGION"/>
    <property type="match status" value="1"/>
</dbReference>
<evidence type="ECO:0000255" key="1"/>
<evidence type="ECO:0000255" key="2">
    <source>
        <dbReference type="PROSITE-ProRule" id="PRU00026"/>
    </source>
</evidence>
<evidence type="ECO:0000255" key="3">
    <source>
        <dbReference type="PROSITE-ProRule" id="PRU01119"/>
    </source>
</evidence>
<evidence type="ECO:0000256" key="4">
    <source>
        <dbReference type="SAM" id="MobiDB-lite"/>
    </source>
</evidence>
<evidence type="ECO:0000269" key="5">
    <source>
    </source>
</evidence>
<evidence type="ECO:0000269" key="6">
    <source>
    </source>
</evidence>
<evidence type="ECO:0000269" key="7">
    <source>
    </source>
</evidence>
<evidence type="ECO:0000269" key="8">
    <source>
    </source>
</evidence>
<evidence type="ECO:0000305" key="9"/>
<reference key="1">
    <citation type="journal article" date="1999" name="Mol. Biol. Cell">
        <title>LvsA, a protein related to the mouse beige protein, is required for cytokinesis in Dictyostelium.</title>
        <authorList>
            <person name="Kwak E."/>
            <person name="Gerald N."/>
            <person name="Larochelle D.A."/>
            <person name="Vithalani K.K."/>
            <person name="Niswonger M.L."/>
            <person name="Maready M."/>
            <person name="De Lozanne A."/>
        </authorList>
    </citation>
    <scope>NUCLEOTIDE SEQUENCE [GENOMIC DNA]</scope>
    <scope>FUNCTION</scope>
    <source>
        <strain>AX3 / DH1</strain>
    </source>
</reference>
<reference key="2">
    <citation type="journal article" date="2005" name="Nature">
        <title>The genome of the social amoeba Dictyostelium discoideum.</title>
        <authorList>
            <person name="Eichinger L."/>
            <person name="Pachebat J.A."/>
            <person name="Gloeckner G."/>
            <person name="Rajandream M.A."/>
            <person name="Sucgang R."/>
            <person name="Berriman M."/>
            <person name="Song J."/>
            <person name="Olsen R."/>
            <person name="Szafranski K."/>
            <person name="Xu Q."/>
            <person name="Tunggal B."/>
            <person name="Kummerfeld S."/>
            <person name="Madera M."/>
            <person name="Konfortov B.A."/>
            <person name="Rivero F."/>
            <person name="Bankier A.T."/>
            <person name="Lehmann R."/>
            <person name="Hamlin N."/>
            <person name="Davies R."/>
            <person name="Gaudet P."/>
            <person name="Fey P."/>
            <person name="Pilcher K."/>
            <person name="Chen G."/>
            <person name="Saunders D."/>
            <person name="Sodergren E.J."/>
            <person name="Davis P."/>
            <person name="Kerhornou A."/>
            <person name="Nie X."/>
            <person name="Hall N."/>
            <person name="Anjard C."/>
            <person name="Hemphill L."/>
            <person name="Bason N."/>
            <person name="Farbrother P."/>
            <person name="Desany B."/>
            <person name="Just E."/>
            <person name="Morio T."/>
            <person name="Rost R."/>
            <person name="Churcher C.M."/>
            <person name="Cooper J."/>
            <person name="Haydock S."/>
            <person name="van Driessche N."/>
            <person name="Cronin A."/>
            <person name="Goodhead I."/>
            <person name="Muzny D.M."/>
            <person name="Mourier T."/>
            <person name="Pain A."/>
            <person name="Lu M."/>
            <person name="Harper D."/>
            <person name="Lindsay R."/>
            <person name="Hauser H."/>
            <person name="James K.D."/>
            <person name="Quiles M."/>
            <person name="Madan Babu M."/>
            <person name="Saito T."/>
            <person name="Buchrieser C."/>
            <person name="Wardroper A."/>
            <person name="Felder M."/>
            <person name="Thangavelu M."/>
            <person name="Johnson D."/>
            <person name="Knights A."/>
            <person name="Loulseged H."/>
            <person name="Mungall K.L."/>
            <person name="Oliver K."/>
            <person name="Price C."/>
            <person name="Quail M.A."/>
            <person name="Urushihara H."/>
            <person name="Hernandez J."/>
            <person name="Rabbinowitsch E."/>
            <person name="Steffen D."/>
            <person name="Sanders M."/>
            <person name="Ma J."/>
            <person name="Kohara Y."/>
            <person name="Sharp S."/>
            <person name="Simmonds M.N."/>
            <person name="Spiegler S."/>
            <person name="Tivey A."/>
            <person name="Sugano S."/>
            <person name="White B."/>
            <person name="Walker D."/>
            <person name="Woodward J.R."/>
            <person name="Winckler T."/>
            <person name="Tanaka Y."/>
            <person name="Shaulsky G."/>
            <person name="Schleicher M."/>
            <person name="Weinstock G.M."/>
            <person name="Rosenthal A."/>
            <person name="Cox E.C."/>
            <person name="Chisholm R.L."/>
            <person name="Gibbs R.A."/>
            <person name="Loomis W.F."/>
            <person name="Platzer M."/>
            <person name="Kay R.R."/>
            <person name="Williams J.G."/>
            <person name="Dear P.H."/>
            <person name="Noegel A.A."/>
            <person name="Barrell B.G."/>
            <person name="Kuspa A."/>
        </authorList>
    </citation>
    <scope>NUCLEOTIDE SEQUENCE [LARGE SCALE GENOMIC DNA]</scope>
    <source>
        <strain>AX4</strain>
    </source>
</reference>
<reference key="3">
    <citation type="journal article" date="2002" name="J. Cell Sci.">
        <title>Two members of the beige/CHS (BEACH) family are involved at different stages in the organization of the endocytic pathway in Dictyostelium.</title>
        <authorList>
            <person name="Cornillon S."/>
            <person name="Dubois A."/>
            <person name="Bruckert F."/>
            <person name="Lefkir Y."/>
            <person name="Marchetti A."/>
            <person name="Benghezal M."/>
            <person name="De Lozanne A."/>
            <person name="Letourneur F."/>
            <person name="Cosson P."/>
        </authorList>
    </citation>
    <scope>FUNCTION</scope>
</reference>
<reference key="4">
    <citation type="journal article" date="2002" name="Traffic">
        <title>The Dictyostelium LvsA protein is localized on the contractile vacuole and is required for osmoregulation.</title>
        <authorList>
            <person name="Gerald N.J."/>
            <person name="Siano M."/>
            <person name="De Lozanne A."/>
        </authorList>
    </citation>
    <scope>FUNCTION</scope>
    <scope>SUBCELLULAR LOCATION</scope>
</reference>
<reference key="5">
    <citation type="journal article" date="2004" name="Traffic">
        <title>Structure-function analysis of the BEACH protein LvsA.</title>
        <authorList>
            <person name="Wu W.-I."/>
            <person name="Yajnik J."/>
            <person name="Siano M."/>
            <person name="De Lozanne A."/>
        </authorList>
    </citation>
    <scope>FUNCTION</scope>
    <scope>SUBCELLULAR LOCATION</scope>
</reference>